<proteinExistence type="inferred from homology"/>
<evidence type="ECO:0000255" key="1">
    <source>
        <dbReference type="HAMAP-Rule" id="MF_00595"/>
    </source>
</evidence>
<keyword id="KW-0120">Carbon dioxide fixation</keyword>
<keyword id="KW-0456">Lyase</keyword>
<keyword id="KW-0460">Magnesium</keyword>
<keyword id="KW-1185">Reference proteome</keyword>
<reference key="1">
    <citation type="journal article" date="2003" name="Proc. Natl. Acad. Sci. U.S.A.">
        <title>Genome sequence of the cyanobacterium Prochlorococcus marinus SS120, a nearly minimal oxyphototrophic genome.</title>
        <authorList>
            <person name="Dufresne A."/>
            <person name="Salanoubat M."/>
            <person name="Partensky F."/>
            <person name="Artiguenave F."/>
            <person name="Axmann I.M."/>
            <person name="Barbe V."/>
            <person name="Duprat S."/>
            <person name="Galperin M.Y."/>
            <person name="Koonin E.V."/>
            <person name="Le Gall F."/>
            <person name="Makarova K.S."/>
            <person name="Ostrowski M."/>
            <person name="Oztas S."/>
            <person name="Robert C."/>
            <person name="Rogozin I.B."/>
            <person name="Scanlan D.J."/>
            <person name="Tandeau de Marsac N."/>
            <person name="Weissenbach J."/>
            <person name="Wincker P."/>
            <person name="Wolf Y.I."/>
            <person name="Hess W.R."/>
        </authorList>
    </citation>
    <scope>NUCLEOTIDE SEQUENCE [LARGE SCALE GENOMIC DNA]</scope>
    <source>
        <strain>SARG / CCMP1375 / SS120</strain>
    </source>
</reference>
<organism>
    <name type="scientific">Prochlorococcus marinus (strain SARG / CCMP1375 / SS120)</name>
    <dbReference type="NCBI Taxonomy" id="167539"/>
    <lineage>
        <taxon>Bacteria</taxon>
        <taxon>Bacillati</taxon>
        <taxon>Cyanobacteriota</taxon>
        <taxon>Cyanophyceae</taxon>
        <taxon>Synechococcales</taxon>
        <taxon>Prochlorococcaceae</taxon>
        <taxon>Prochlorococcus</taxon>
    </lineage>
</organism>
<protein>
    <recommendedName>
        <fullName evidence="1">Phosphoenolpyruvate carboxylase</fullName>
        <shortName evidence="1">PEPC</shortName>
        <shortName evidence="1">PEPCase</shortName>
        <ecNumber evidence="1">4.1.1.31</ecNumber>
    </recommendedName>
</protein>
<dbReference type="EC" id="4.1.1.31" evidence="1"/>
<dbReference type="EMBL" id="AE017126">
    <property type="protein sequence ID" value="AAQ00774.1"/>
    <property type="molecule type" value="Genomic_DNA"/>
</dbReference>
<dbReference type="RefSeq" id="NP_876121.1">
    <property type="nucleotide sequence ID" value="NC_005042.1"/>
</dbReference>
<dbReference type="RefSeq" id="WP_011125879.1">
    <property type="nucleotide sequence ID" value="NC_005042.1"/>
</dbReference>
<dbReference type="SMR" id="Q7V9U4"/>
<dbReference type="STRING" id="167539.Pro_1730"/>
<dbReference type="EnsemblBacteria" id="AAQ00774">
    <property type="protein sequence ID" value="AAQ00774"/>
    <property type="gene ID" value="Pro_1730"/>
</dbReference>
<dbReference type="KEGG" id="pma:Pro_1730"/>
<dbReference type="PATRIC" id="fig|167539.5.peg.1825"/>
<dbReference type="eggNOG" id="COG2352">
    <property type="taxonomic scope" value="Bacteria"/>
</dbReference>
<dbReference type="HOGENOM" id="CLU_006557_2_0_3"/>
<dbReference type="OrthoDB" id="9768133at2"/>
<dbReference type="Proteomes" id="UP000001420">
    <property type="component" value="Chromosome"/>
</dbReference>
<dbReference type="GO" id="GO:0005829">
    <property type="term" value="C:cytosol"/>
    <property type="evidence" value="ECO:0007669"/>
    <property type="project" value="TreeGrafter"/>
</dbReference>
<dbReference type="GO" id="GO:0000287">
    <property type="term" value="F:magnesium ion binding"/>
    <property type="evidence" value="ECO:0007669"/>
    <property type="project" value="UniProtKB-UniRule"/>
</dbReference>
<dbReference type="GO" id="GO:0008964">
    <property type="term" value="F:phosphoenolpyruvate carboxylase activity"/>
    <property type="evidence" value="ECO:0007669"/>
    <property type="project" value="UniProtKB-UniRule"/>
</dbReference>
<dbReference type="GO" id="GO:0015977">
    <property type="term" value="P:carbon fixation"/>
    <property type="evidence" value="ECO:0007669"/>
    <property type="project" value="UniProtKB-UniRule"/>
</dbReference>
<dbReference type="GO" id="GO:0006107">
    <property type="term" value="P:oxaloacetate metabolic process"/>
    <property type="evidence" value="ECO:0007669"/>
    <property type="project" value="UniProtKB-UniRule"/>
</dbReference>
<dbReference type="GO" id="GO:0006099">
    <property type="term" value="P:tricarboxylic acid cycle"/>
    <property type="evidence" value="ECO:0007669"/>
    <property type="project" value="InterPro"/>
</dbReference>
<dbReference type="Gene3D" id="1.20.1440.90">
    <property type="entry name" value="Phosphoenolpyruvate/pyruvate domain"/>
    <property type="match status" value="1"/>
</dbReference>
<dbReference type="HAMAP" id="MF_00595">
    <property type="entry name" value="PEPcase_type1"/>
    <property type="match status" value="1"/>
</dbReference>
<dbReference type="InterPro" id="IPR021135">
    <property type="entry name" value="PEP_COase"/>
</dbReference>
<dbReference type="InterPro" id="IPR022805">
    <property type="entry name" value="PEP_COase_bac/pln-type"/>
</dbReference>
<dbReference type="InterPro" id="IPR018129">
    <property type="entry name" value="PEP_COase_Lys_AS"/>
</dbReference>
<dbReference type="InterPro" id="IPR033129">
    <property type="entry name" value="PEPCASE_His_AS"/>
</dbReference>
<dbReference type="InterPro" id="IPR015813">
    <property type="entry name" value="Pyrv/PenolPyrv_kinase-like_dom"/>
</dbReference>
<dbReference type="NCBIfam" id="NF000584">
    <property type="entry name" value="PRK00009.1"/>
    <property type="match status" value="1"/>
</dbReference>
<dbReference type="PANTHER" id="PTHR30523">
    <property type="entry name" value="PHOSPHOENOLPYRUVATE CARBOXYLASE"/>
    <property type="match status" value="1"/>
</dbReference>
<dbReference type="PANTHER" id="PTHR30523:SF6">
    <property type="entry name" value="PHOSPHOENOLPYRUVATE CARBOXYLASE"/>
    <property type="match status" value="1"/>
</dbReference>
<dbReference type="Pfam" id="PF00311">
    <property type="entry name" value="PEPcase"/>
    <property type="match status" value="1"/>
</dbReference>
<dbReference type="PRINTS" id="PR00150">
    <property type="entry name" value="PEPCARBXLASE"/>
</dbReference>
<dbReference type="SUPFAM" id="SSF51621">
    <property type="entry name" value="Phosphoenolpyruvate/pyruvate domain"/>
    <property type="match status" value="1"/>
</dbReference>
<dbReference type="PROSITE" id="PS00781">
    <property type="entry name" value="PEPCASE_1"/>
    <property type="match status" value="1"/>
</dbReference>
<dbReference type="PROSITE" id="PS00393">
    <property type="entry name" value="PEPCASE_2"/>
    <property type="match status" value="1"/>
</dbReference>
<feature type="chain" id="PRO_0000166610" description="Phosphoenolpyruvate carboxylase">
    <location>
        <begin position="1"/>
        <end position="1001"/>
    </location>
</feature>
<feature type="active site" evidence="1">
    <location>
        <position position="189"/>
    </location>
</feature>
<feature type="active site" evidence="1">
    <location>
        <position position="642"/>
    </location>
</feature>
<accession>Q7V9U4</accession>
<sequence length="1001" mass="115162">MTELDNFSMLEASKQVPDRKESSQILADHMSGRLLQKRLELVEDLWETVVRSECPLEQVERLLRLKQLSNSSGIVGEEQTNQINEIVELIKEMDLAEAISAARAFSLYFQLVNILEQRIEEDSYLESISRGQEEKINTSIDPFAPPLASQTAPATFSELFDRLRRLNVPPGQLEELLREMDIRLVFTAHPTEIVRHTVRHKQRRVASLLQQLQSDEVFSLSERDNLRLQLEEEIRLWWRTDELHQFKPTVLDEVDYALHYFQQVLFDAMPQLRRRICSALSQSYPDIDVPQEAFCTFGSWVGSDRDGNPSVTPEITWRTACYQRKLMLDRYMHSVQELRNQLSISMQWSQVSTQLLESLEMDRVRFPHIYEERAARYRLEPYRLKLSYTLERLKFTQQRNQELSEAGWATTIERTNVSNNPDEDLHYCSIDEFRRDLELIRNSLVATNLSCEQLDTLLTQVHIFAFSLASLDIRQESTRHSEAIDELTRYLNLPKSYIEMTEDEKVIWLMDELQTLRPLIPSAVQWSKSTEETFAVFRMLDRLQKEFGSRICRSYVISMSHTVSDLLEVLLLAKEYGLVDISSESSDLLVIPLFETVEDLQHAPSVMEELFQSEIYLKLLPRVGEKSQPLQELMLGYSDSNKDSGFLSSNWEIHQAQIALQNLASSHGVALRLFHGRGGSVGRGGGPAYQAILAQPSGTLKGRIKITEQGEVLASKYSLPELALYNLETVTTAVLQNSLVTNQWDATPSWNELMTRLAVRSRQHYRALVHDNPDLVAFFQEVTPIEEISKLQISSRPARRKTGAKDLSSLRAIPWVFGWTQSRFLLPSWFGVGTALEEELKSDPDHIELLRMLNQRWPFFRMLISKVEMTLSKVDLEVAYHYMTSLGSHENREAFNCIFEIISNEYKLTRRLVLEITGKPKLLSADPALQLSVDLRNRTIVPLGFLQVALLCRLRDQNRQPPMSETLLTEGDIGRTYSRSELLRGALLTINGIAAGMRNTG</sequence>
<name>CAPP_PROMA</name>
<comment type="function">
    <text evidence="1">Forms oxaloacetate, a four-carbon dicarboxylic acid source for the tricarboxylic acid cycle.</text>
</comment>
<comment type="catalytic activity">
    <reaction evidence="1">
        <text>oxaloacetate + phosphate = phosphoenolpyruvate + hydrogencarbonate</text>
        <dbReference type="Rhea" id="RHEA:28370"/>
        <dbReference type="ChEBI" id="CHEBI:16452"/>
        <dbReference type="ChEBI" id="CHEBI:17544"/>
        <dbReference type="ChEBI" id="CHEBI:43474"/>
        <dbReference type="ChEBI" id="CHEBI:58702"/>
        <dbReference type="EC" id="4.1.1.31"/>
    </reaction>
</comment>
<comment type="cofactor">
    <cofactor evidence="1">
        <name>Mg(2+)</name>
        <dbReference type="ChEBI" id="CHEBI:18420"/>
    </cofactor>
</comment>
<comment type="similarity">
    <text evidence="1">Belongs to the PEPCase type 1 family.</text>
</comment>
<gene>
    <name evidence="1" type="primary">ppc</name>
    <name type="ordered locus">Pro_1730</name>
</gene>